<name>ACHA6_RAT</name>
<proteinExistence type="evidence at protein level"/>
<keyword id="KW-1003">Cell membrane</keyword>
<keyword id="KW-1015">Disulfide bond</keyword>
<keyword id="KW-0325">Glycoprotein</keyword>
<keyword id="KW-0407">Ion channel</keyword>
<keyword id="KW-0406">Ion transport</keyword>
<keyword id="KW-1071">Ligand-gated ion channel</keyword>
<keyword id="KW-0472">Membrane</keyword>
<keyword id="KW-0597">Phosphoprotein</keyword>
<keyword id="KW-0675">Receptor</keyword>
<keyword id="KW-1185">Reference proteome</keyword>
<keyword id="KW-0732">Signal</keyword>
<keyword id="KW-0770">Synapse</keyword>
<keyword id="KW-0812">Transmembrane</keyword>
<keyword id="KW-1133">Transmembrane helix</keyword>
<keyword id="KW-0813">Transport</keyword>
<feature type="signal peptide" evidence="1">
    <location>
        <begin position="1"/>
        <end position="30"/>
    </location>
</feature>
<feature type="chain" id="PRO_0000000363" description="Neuronal acetylcholine receptor subunit alpha-6">
    <location>
        <begin position="31"/>
        <end position="493"/>
    </location>
</feature>
<feature type="topological domain" description="Extracellular" evidence="6">
    <location>
        <begin position="31"/>
        <end position="240"/>
    </location>
</feature>
<feature type="transmembrane region" description="Helical" evidence="6">
    <location>
        <begin position="241"/>
        <end position="265"/>
    </location>
</feature>
<feature type="transmembrane region" description="Helical" evidence="6">
    <location>
        <begin position="272"/>
        <end position="290"/>
    </location>
</feature>
<feature type="transmembrane region" description="Helical" evidence="6">
    <location>
        <begin position="306"/>
        <end position="327"/>
    </location>
</feature>
<feature type="topological domain" description="Cytoplasmic" evidence="6">
    <location>
        <begin position="328"/>
        <end position="464"/>
    </location>
</feature>
<feature type="transmembrane region" description="Helical" evidence="6">
    <location>
        <begin position="465"/>
        <end position="484"/>
    </location>
</feature>
<feature type="modified residue" description="Phosphoserine" evidence="3">
    <location>
        <position position="401"/>
    </location>
</feature>
<feature type="glycosylation site" description="N-linked (GlcNAc...) asparagine" evidence="6">
    <location>
        <position position="54"/>
    </location>
</feature>
<feature type="glycosylation site" description="N-linked (GlcNAc...) asparagine" evidence="6">
    <location>
        <position position="171"/>
    </location>
</feature>
<feature type="disulfide bond" evidence="1">
    <location>
        <begin position="158"/>
        <end position="172"/>
    </location>
</feature>
<feature type="disulfide bond" description="Associated with receptor activation" evidence="1">
    <location>
        <begin position="222"/>
        <end position="223"/>
    </location>
</feature>
<sequence length="493" mass="56947">MLNGWGRGDLRSGLCLWICGFLAFFKGSRGCVSEEQLFHTLFAHYNRFIRPVENVSDPVTVHFELAITQLANVDEVNQIMETNLWLRHVWKDYRLCWDPTEYDGIETLRVPADNIWKPDIVLYNNAVGDFQVEGKTKALLKYDGVITWTPPAIFKSSCPMDITFFPFDHQNCSLKFGSWTYDKAEIDLLIIGSKVDMNDFWENSEWEIVDASGYKHDIKYNCCEEIYTDITYSFYIRRLPMFYTINLIIPCLFISFLTVLVFYLPSDCGEKVTLCISVLLSLTVFLLVITETIPSTSLVIPLVGEYLLFTMIFVTLSIVVTVFVLNIHYRTPATHTMPKWVKTMFLQVFPSILMMRRPLDKTKEMDGVKDPKTHTKRPAKVKFTHRKEPKLLKECRHCHKSSEIAPGKRLSQQPAQWVTENSEHPPDVEDVIDSVQFIAENMKSHNETKEVEDDWKYMAMVVDRVFLWVFIIVCVFGTVGLFLQPLLGNTGAS</sequence>
<accession>P43143</accession>
<comment type="function">
    <text evidence="5 7">Component of neuronal acetylcholine receptors (nAChRs) that function as pentameric, ligand-gated cation channels with high calcium permeability among other activities. nAChRs are excitatory neurotrasnmitter receptors formed by a collection of nAChR subunits known to mediate synaptic transmission in the nervous system and the neuromuscular junction. Each nAchR subunit confers differential attributes to channel properties, including activation, deactivation and desensitization kinetics, pH sensitivity, cation permeability, and binding to allosteric modulators. CHRNA6 forms pentameric channels with CHRNB2 and CHRNA4 that exhibit high sensitivity to ACh and nicotine and are predominantly expressed in only a few brain areas, including dopaminergic neurons, norepirephrine neurons and cells of the visual system (By similarity). nAChrs containing CHRNA6 subunits mediate endogenous cholinergic modulation of dopamine and gamma-aminobutyric acid (GABA) release in response to nicotine at nerve terminals (PubMed:21325521).</text>
</comment>
<comment type="catalytic activity">
    <reaction evidence="7">
        <text>Ca(2+)(in) = Ca(2+)(out)</text>
        <dbReference type="Rhea" id="RHEA:29671"/>
        <dbReference type="ChEBI" id="CHEBI:29108"/>
    </reaction>
</comment>
<comment type="catalytic activity">
    <reaction evidence="2">
        <text>K(+)(in) = K(+)(out)</text>
        <dbReference type="Rhea" id="RHEA:29463"/>
        <dbReference type="ChEBI" id="CHEBI:29103"/>
    </reaction>
</comment>
<comment type="catalytic activity">
    <reaction evidence="2">
        <text>Na(+)(in) = Na(+)(out)</text>
        <dbReference type="Rhea" id="RHEA:34963"/>
        <dbReference type="ChEBI" id="CHEBI:29101"/>
    </reaction>
</comment>
<comment type="activity regulation">
    <text evidence="7">Activated by a myriad of ligands such as acetylcholine, cytisine and nicotine. CHRNA6 nAChR activity is inhibited by the antagonists alpha-conotoxin MII and PIA, a small disulfide-constrained peptides from cone snails.</text>
</comment>
<comment type="subunit">
    <text evidence="4 5 7">Neuronal AChR is composed of two different types of subunits: alpha and non-alpha (beta). CHRNA6/alpha-6 subunit can be combined to CHRNB2/beta-2 and CHRNA4/alpha-4 to give rise to functional receptors (PubMed:21325521). Interacts with LYPD6 (By similarity).</text>
</comment>
<comment type="subcellular location">
    <subcellularLocation>
        <location evidence="7">Synaptic cell membrane</location>
        <topology evidence="6">Multi-pass membrane protein</topology>
    </subcellularLocation>
</comment>
<comment type="tissue specificity">
    <text evidence="7">Predominantly expressed in only a few brain areas, including dopaminergic neurons, norepirephrine neurons and cells of the visual system.</text>
</comment>
<comment type="similarity">
    <text evidence="8">Belongs to the ligand-gated ion channel (TC 1.A.9) family. Acetylcholine receptor (TC 1.A.9.1) subfamily. Alpha-6/CHRNA6 sub-subfamily.</text>
</comment>
<dbReference type="EMBL" id="L08227">
    <property type="protein sequence ID" value="AAA41674.1"/>
    <property type="molecule type" value="mRNA"/>
</dbReference>
<dbReference type="RefSeq" id="NP_476532.1">
    <property type="nucleotide sequence ID" value="NM_057184.1"/>
</dbReference>
<dbReference type="SMR" id="P43143"/>
<dbReference type="ComplexPortal" id="CPX-203">
    <property type="entry name" value="Neuronal nicotinic acetylcholine receptor complex, alpha3-alpha6-beta2-beta3"/>
</dbReference>
<dbReference type="ComplexPortal" id="CPX-211">
    <property type="entry name" value="Neuronal nicotinic acetylcholine receptor complex, alpha3-alpha6-beta4"/>
</dbReference>
<dbReference type="FunCoup" id="P43143">
    <property type="interactions" value="39"/>
</dbReference>
<dbReference type="IntAct" id="P43143">
    <property type="interactions" value="2"/>
</dbReference>
<dbReference type="STRING" id="10116.ENSRNOP00000016452"/>
<dbReference type="BindingDB" id="P43143"/>
<dbReference type="ChEMBL" id="CHEMBL4747"/>
<dbReference type="DrugCentral" id="P43143"/>
<dbReference type="GlyCosmos" id="P43143">
    <property type="glycosylation" value="2 sites, No reported glycans"/>
</dbReference>
<dbReference type="GlyGen" id="P43143">
    <property type="glycosylation" value="2 sites"/>
</dbReference>
<dbReference type="PhosphoSitePlus" id="P43143"/>
<dbReference type="PaxDb" id="10116-ENSRNOP00000016452"/>
<dbReference type="GeneID" id="81721"/>
<dbReference type="KEGG" id="rno:81721"/>
<dbReference type="UCSC" id="RGD:69281">
    <property type="organism name" value="rat"/>
</dbReference>
<dbReference type="AGR" id="RGD:69281"/>
<dbReference type="CTD" id="8973"/>
<dbReference type="RGD" id="69281">
    <property type="gene designation" value="Chrna6"/>
</dbReference>
<dbReference type="eggNOG" id="KOG3645">
    <property type="taxonomic scope" value="Eukaryota"/>
</dbReference>
<dbReference type="InParanoid" id="P43143"/>
<dbReference type="PhylomeDB" id="P43143"/>
<dbReference type="Reactome" id="R-RNO-629594">
    <property type="pathway name" value="Highly calcium permeable postsynaptic nicotinic acetylcholine receptors"/>
</dbReference>
<dbReference type="Reactome" id="R-RNO-629597">
    <property type="pathway name" value="Highly calcium permeable nicotinic acetylcholine receptors"/>
</dbReference>
<dbReference type="PRO" id="PR:P43143"/>
<dbReference type="Proteomes" id="UP000002494">
    <property type="component" value="Unplaced"/>
</dbReference>
<dbReference type="GO" id="GO:0005892">
    <property type="term" value="C:acetylcholine-gated channel complex"/>
    <property type="evidence" value="ECO:0000266"/>
    <property type="project" value="RGD"/>
</dbReference>
<dbReference type="GO" id="GO:0098691">
    <property type="term" value="C:dopaminergic synapse"/>
    <property type="evidence" value="ECO:0000250"/>
    <property type="project" value="UniProtKB"/>
</dbReference>
<dbReference type="GO" id="GO:0043005">
    <property type="term" value="C:neuron projection"/>
    <property type="evidence" value="ECO:0000318"/>
    <property type="project" value="GO_Central"/>
</dbReference>
<dbReference type="GO" id="GO:0005886">
    <property type="term" value="C:plasma membrane"/>
    <property type="evidence" value="ECO:0000318"/>
    <property type="project" value="GO_Central"/>
</dbReference>
<dbReference type="GO" id="GO:0045211">
    <property type="term" value="C:postsynaptic membrane"/>
    <property type="evidence" value="ECO:0000314"/>
    <property type="project" value="SynGO"/>
</dbReference>
<dbReference type="GO" id="GO:0042734">
    <property type="term" value="C:presynaptic membrane"/>
    <property type="evidence" value="ECO:0000314"/>
    <property type="project" value="SynGO"/>
</dbReference>
<dbReference type="GO" id="GO:0032991">
    <property type="term" value="C:protein-containing complex"/>
    <property type="evidence" value="ECO:0000314"/>
    <property type="project" value="RGD"/>
</dbReference>
<dbReference type="GO" id="GO:0045202">
    <property type="term" value="C:synapse"/>
    <property type="evidence" value="ECO:0000318"/>
    <property type="project" value="GO_Central"/>
</dbReference>
<dbReference type="GO" id="GO:0022848">
    <property type="term" value="F:acetylcholine-gated monoatomic cation-selective channel activity"/>
    <property type="evidence" value="ECO:0000250"/>
    <property type="project" value="UniProtKB"/>
</dbReference>
<dbReference type="GO" id="GO:0004888">
    <property type="term" value="F:transmembrane signaling receptor activity"/>
    <property type="evidence" value="ECO:0007669"/>
    <property type="project" value="InterPro"/>
</dbReference>
<dbReference type="GO" id="GO:0095500">
    <property type="term" value="P:acetylcholine receptor signaling pathway"/>
    <property type="evidence" value="ECO:0000318"/>
    <property type="project" value="GO_Central"/>
</dbReference>
<dbReference type="GO" id="GO:0035095">
    <property type="term" value="P:behavioral response to nicotine"/>
    <property type="evidence" value="ECO:0000250"/>
    <property type="project" value="UniProtKB"/>
</dbReference>
<dbReference type="GO" id="GO:0051899">
    <property type="term" value="P:membrane depolarization"/>
    <property type="evidence" value="ECO:0000266"/>
    <property type="project" value="RGD"/>
</dbReference>
<dbReference type="GO" id="GO:0034220">
    <property type="term" value="P:monoatomic ion transmembrane transport"/>
    <property type="evidence" value="ECO:0000318"/>
    <property type="project" value="GO_Central"/>
</dbReference>
<dbReference type="GO" id="GO:0007274">
    <property type="term" value="P:neuromuscular synaptic transmission"/>
    <property type="evidence" value="ECO:0000318"/>
    <property type="project" value="GO_Central"/>
</dbReference>
<dbReference type="GO" id="GO:0099171">
    <property type="term" value="P:presynaptic modulation of chemical synaptic transmission"/>
    <property type="evidence" value="ECO:0000266"/>
    <property type="project" value="RGD"/>
</dbReference>
<dbReference type="GO" id="GO:0014059">
    <property type="term" value="P:regulation of dopamine secretion"/>
    <property type="evidence" value="ECO:0000250"/>
    <property type="project" value="UniProtKB"/>
</dbReference>
<dbReference type="GO" id="GO:0035094">
    <property type="term" value="P:response to nicotine"/>
    <property type="evidence" value="ECO:0000318"/>
    <property type="project" value="GO_Central"/>
</dbReference>
<dbReference type="GO" id="GO:0007271">
    <property type="term" value="P:synaptic transmission, cholinergic"/>
    <property type="evidence" value="ECO:0000318"/>
    <property type="project" value="GO_Central"/>
</dbReference>
<dbReference type="CDD" id="cd19064">
    <property type="entry name" value="LGIC_TM_nAChR"/>
    <property type="match status" value="1"/>
</dbReference>
<dbReference type="FunFam" id="2.70.170.10:FF:000008">
    <property type="entry name" value="Cholinergic receptor nicotinic alpha 6 subunit"/>
    <property type="match status" value="1"/>
</dbReference>
<dbReference type="FunFam" id="1.20.58.390:FF:000017">
    <property type="entry name" value="Neuronal acetylcholine receptor subunit alpha-3"/>
    <property type="match status" value="1"/>
</dbReference>
<dbReference type="FunFam" id="1.20.58.390:FF:000001">
    <property type="entry name" value="Neuronal nicotinic acetylcholine receptor subunit 3"/>
    <property type="match status" value="1"/>
</dbReference>
<dbReference type="Gene3D" id="2.70.170.10">
    <property type="entry name" value="Neurotransmitter-gated ion-channel ligand-binding domain"/>
    <property type="match status" value="1"/>
</dbReference>
<dbReference type="Gene3D" id="1.20.58.390">
    <property type="entry name" value="Neurotransmitter-gated ion-channel transmembrane domain"/>
    <property type="match status" value="2"/>
</dbReference>
<dbReference type="InterPro" id="IPR006202">
    <property type="entry name" value="Neur_chan_lig-bd"/>
</dbReference>
<dbReference type="InterPro" id="IPR036734">
    <property type="entry name" value="Neur_chan_lig-bd_sf"/>
</dbReference>
<dbReference type="InterPro" id="IPR006201">
    <property type="entry name" value="Neur_channel"/>
</dbReference>
<dbReference type="InterPro" id="IPR036719">
    <property type="entry name" value="Neuro-gated_channel_TM_sf"/>
</dbReference>
<dbReference type="InterPro" id="IPR038050">
    <property type="entry name" value="Neuro_actylchol_rec"/>
</dbReference>
<dbReference type="InterPro" id="IPR006029">
    <property type="entry name" value="Neurotrans-gated_channel_TM"/>
</dbReference>
<dbReference type="InterPro" id="IPR018000">
    <property type="entry name" value="Neurotransmitter_ion_chnl_CS"/>
</dbReference>
<dbReference type="InterPro" id="IPR002394">
    <property type="entry name" value="Nicotinic_acetylcholine_rcpt"/>
</dbReference>
<dbReference type="NCBIfam" id="TIGR00860">
    <property type="entry name" value="LIC"/>
    <property type="match status" value="1"/>
</dbReference>
<dbReference type="PANTHER" id="PTHR18945">
    <property type="entry name" value="NEUROTRANSMITTER GATED ION CHANNEL"/>
    <property type="match status" value="1"/>
</dbReference>
<dbReference type="Pfam" id="PF02931">
    <property type="entry name" value="Neur_chan_LBD"/>
    <property type="match status" value="1"/>
</dbReference>
<dbReference type="Pfam" id="PF02932">
    <property type="entry name" value="Neur_chan_memb"/>
    <property type="match status" value="1"/>
</dbReference>
<dbReference type="PRINTS" id="PR00254">
    <property type="entry name" value="NICOTINICR"/>
</dbReference>
<dbReference type="PRINTS" id="PR00252">
    <property type="entry name" value="NRIONCHANNEL"/>
</dbReference>
<dbReference type="SUPFAM" id="SSF90112">
    <property type="entry name" value="Neurotransmitter-gated ion-channel transmembrane pore"/>
    <property type="match status" value="1"/>
</dbReference>
<dbReference type="SUPFAM" id="SSF63712">
    <property type="entry name" value="Nicotinic receptor ligand binding domain-like"/>
    <property type="match status" value="1"/>
</dbReference>
<dbReference type="PROSITE" id="PS00236">
    <property type="entry name" value="NEUROTR_ION_CHANNEL"/>
    <property type="match status" value="1"/>
</dbReference>
<reference key="1">
    <citation type="submission" date="1992-12" db="EMBL/GenBank/DDBJ databases">
        <title>Nucleotide sequence of a cDNA clone encoding the rat neuronal nicotinic acetylcholine receptor subunit gene alpha6.</title>
        <authorList>
            <person name="Boulter J."/>
        </authorList>
    </citation>
    <scope>NUCLEOTIDE SEQUENCE [MRNA]</scope>
</reference>
<reference key="2">
    <citation type="journal article" date="2011" name="J. Neurosci.">
        <title>Functional nicotinic acetylcholine receptors containing alpha6 subunits are on GABAergic neuronal boutons adherent to ventral tegmental area dopamine neurons.</title>
        <authorList>
            <person name="Yang K."/>
            <person name="Buhlman L."/>
            <person name="Khan G.M."/>
            <person name="Nichols R.A."/>
            <person name="Jin G."/>
            <person name="McIntosh J.M."/>
            <person name="Whiteaker P."/>
            <person name="Lukas R.J."/>
            <person name="Wu J."/>
        </authorList>
    </citation>
    <scope>FUNCTION</scope>
    <scope>ACTIVITY REGULATION</scope>
    <scope>SUBCELLULAR LOCATION</scope>
    <scope>CATALYTIC ACTIVITY</scope>
</reference>
<gene>
    <name type="primary">Chrna6</name>
    <name type="synonym">Acra6</name>
</gene>
<organism>
    <name type="scientific">Rattus norvegicus</name>
    <name type="common">Rat</name>
    <dbReference type="NCBI Taxonomy" id="10116"/>
    <lineage>
        <taxon>Eukaryota</taxon>
        <taxon>Metazoa</taxon>
        <taxon>Chordata</taxon>
        <taxon>Craniata</taxon>
        <taxon>Vertebrata</taxon>
        <taxon>Euteleostomi</taxon>
        <taxon>Mammalia</taxon>
        <taxon>Eutheria</taxon>
        <taxon>Euarchontoglires</taxon>
        <taxon>Glires</taxon>
        <taxon>Rodentia</taxon>
        <taxon>Myomorpha</taxon>
        <taxon>Muroidea</taxon>
        <taxon>Muridae</taxon>
        <taxon>Murinae</taxon>
        <taxon>Rattus</taxon>
    </lineage>
</organism>
<protein>
    <recommendedName>
        <fullName>Neuronal acetylcholine receptor subunit alpha-6</fullName>
    </recommendedName>
</protein>
<evidence type="ECO:0000250" key="1"/>
<evidence type="ECO:0000250" key="2">
    <source>
        <dbReference type="UniProtKB" id="P02709"/>
    </source>
</evidence>
<evidence type="ECO:0000250" key="3">
    <source>
        <dbReference type="UniProtKB" id="P04757"/>
    </source>
</evidence>
<evidence type="ECO:0000250" key="4">
    <source>
        <dbReference type="UniProtKB" id="Q15825"/>
    </source>
</evidence>
<evidence type="ECO:0000250" key="5">
    <source>
        <dbReference type="UniProtKB" id="Q9R0W9"/>
    </source>
</evidence>
<evidence type="ECO:0000255" key="6"/>
<evidence type="ECO:0000269" key="7">
    <source>
    </source>
</evidence>
<evidence type="ECO:0000305" key="8"/>